<proteinExistence type="inferred from homology"/>
<reference key="1">
    <citation type="journal article" date="2003" name="J. Bacteriol.">
        <title>Complete genome sequence of the ammonia-oxidizing bacterium and obligate chemolithoautotroph Nitrosomonas europaea.</title>
        <authorList>
            <person name="Chain P."/>
            <person name="Lamerdin J.E."/>
            <person name="Larimer F.W."/>
            <person name="Regala W."/>
            <person name="Lao V."/>
            <person name="Land M.L."/>
            <person name="Hauser L."/>
            <person name="Hooper A.B."/>
            <person name="Klotz M.G."/>
            <person name="Norton J."/>
            <person name="Sayavedra-Soto L.A."/>
            <person name="Arciero D.M."/>
            <person name="Hommes N.G."/>
            <person name="Whittaker M.M."/>
            <person name="Arp D.J."/>
        </authorList>
    </citation>
    <scope>NUCLEOTIDE SEQUENCE [LARGE SCALE GENOMIC DNA]</scope>
    <source>
        <strain>ATCC 19718 / CIP 103999 / KCTC 2705 / NBRC 14298</strain>
    </source>
</reference>
<sequence length="89" mass="10376">MAVTTDQKSQVMRDYQRAAGDTGSPEVQVALLTTRINSLVDHFKQHVKDHHSRRGLLRMVSRRRKLLDYLKSKNNDSYRALIERLGLRK</sequence>
<name>RS15_NITEU</name>
<organism>
    <name type="scientific">Nitrosomonas europaea (strain ATCC 19718 / CIP 103999 / KCTC 2705 / NBRC 14298)</name>
    <dbReference type="NCBI Taxonomy" id="228410"/>
    <lineage>
        <taxon>Bacteria</taxon>
        <taxon>Pseudomonadati</taxon>
        <taxon>Pseudomonadota</taxon>
        <taxon>Betaproteobacteria</taxon>
        <taxon>Nitrosomonadales</taxon>
        <taxon>Nitrosomonadaceae</taxon>
        <taxon>Nitrosomonas</taxon>
    </lineage>
</organism>
<dbReference type="EMBL" id="AL954747">
    <property type="protein sequence ID" value="CAD84084.1"/>
    <property type="molecule type" value="Genomic_DNA"/>
</dbReference>
<dbReference type="RefSeq" id="WP_011110818.1">
    <property type="nucleotide sequence ID" value="NC_004757.1"/>
</dbReference>
<dbReference type="SMR" id="Q82XS9"/>
<dbReference type="STRING" id="228410.NE0173"/>
<dbReference type="GeneID" id="87103381"/>
<dbReference type="KEGG" id="neu:NE0173"/>
<dbReference type="eggNOG" id="COG0184">
    <property type="taxonomic scope" value="Bacteria"/>
</dbReference>
<dbReference type="HOGENOM" id="CLU_148518_0_0_4"/>
<dbReference type="OrthoDB" id="9799262at2"/>
<dbReference type="PhylomeDB" id="Q82XS9"/>
<dbReference type="Proteomes" id="UP000001416">
    <property type="component" value="Chromosome"/>
</dbReference>
<dbReference type="GO" id="GO:0022627">
    <property type="term" value="C:cytosolic small ribosomal subunit"/>
    <property type="evidence" value="ECO:0007669"/>
    <property type="project" value="TreeGrafter"/>
</dbReference>
<dbReference type="GO" id="GO:0019843">
    <property type="term" value="F:rRNA binding"/>
    <property type="evidence" value="ECO:0007669"/>
    <property type="project" value="UniProtKB-UniRule"/>
</dbReference>
<dbReference type="GO" id="GO:0003735">
    <property type="term" value="F:structural constituent of ribosome"/>
    <property type="evidence" value="ECO:0007669"/>
    <property type="project" value="InterPro"/>
</dbReference>
<dbReference type="GO" id="GO:0006412">
    <property type="term" value="P:translation"/>
    <property type="evidence" value="ECO:0007669"/>
    <property type="project" value="UniProtKB-UniRule"/>
</dbReference>
<dbReference type="CDD" id="cd00353">
    <property type="entry name" value="Ribosomal_S15p_S13e"/>
    <property type="match status" value="1"/>
</dbReference>
<dbReference type="FunFam" id="1.10.287.10:FF:000002">
    <property type="entry name" value="30S ribosomal protein S15"/>
    <property type="match status" value="1"/>
</dbReference>
<dbReference type="Gene3D" id="6.10.250.3130">
    <property type="match status" value="1"/>
</dbReference>
<dbReference type="Gene3D" id="1.10.287.10">
    <property type="entry name" value="S15/NS1, RNA-binding"/>
    <property type="match status" value="1"/>
</dbReference>
<dbReference type="HAMAP" id="MF_01343_B">
    <property type="entry name" value="Ribosomal_uS15_B"/>
    <property type="match status" value="1"/>
</dbReference>
<dbReference type="InterPro" id="IPR000589">
    <property type="entry name" value="Ribosomal_uS15"/>
</dbReference>
<dbReference type="InterPro" id="IPR005290">
    <property type="entry name" value="Ribosomal_uS15_bac-type"/>
</dbReference>
<dbReference type="InterPro" id="IPR009068">
    <property type="entry name" value="uS15_NS1_RNA-bd_sf"/>
</dbReference>
<dbReference type="NCBIfam" id="TIGR00952">
    <property type="entry name" value="S15_bact"/>
    <property type="match status" value="1"/>
</dbReference>
<dbReference type="PANTHER" id="PTHR23321">
    <property type="entry name" value="RIBOSOMAL PROTEIN S15, BACTERIAL AND ORGANELLAR"/>
    <property type="match status" value="1"/>
</dbReference>
<dbReference type="PANTHER" id="PTHR23321:SF26">
    <property type="entry name" value="SMALL RIBOSOMAL SUBUNIT PROTEIN US15M"/>
    <property type="match status" value="1"/>
</dbReference>
<dbReference type="Pfam" id="PF00312">
    <property type="entry name" value="Ribosomal_S15"/>
    <property type="match status" value="1"/>
</dbReference>
<dbReference type="SMART" id="SM01387">
    <property type="entry name" value="Ribosomal_S15"/>
    <property type="match status" value="1"/>
</dbReference>
<dbReference type="SUPFAM" id="SSF47060">
    <property type="entry name" value="S15/NS1 RNA-binding domain"/>
    <property type="match status" value="1"/>
</dbReference>
<dbReference type="PROSITE" id="PS00362">
    <property type="entry name" value="RIBOSOMAL_S15"/>
    <property type="match status" value="1"/>
</dbReference>
<comment type="function">
    <text evidence="1">One of the primary rRNA binding proteins, it binds directly to 16S rRNA where it helps nucleate assembly of the platform of the 30S subunit by binding and bridging several RNA helices of the 16S rRNA.</text>
</comment>
<comment type="function">
    <text evidence="1">Forms an intersubunit bridge (bridge B4) with the 23S rRNA of the 50S subunit in the ribosome.</text>
</comment>
<comment type="subunit">
    <text evidence="1">Part of the 30S ribosomal subunit. Forms a bridge to the 50S subunit in the 70S ribosome, contacting the 23S rRNA.</text>
</comment>
<comment type="similarity">
    <text evidence="1">Belongs to the universal ribosomal protein uS15 family.</text>
</comment>
<evidence type="ECO:0000255" key="1">
    <source>
        <dbReference type="HAMAP-Rule" id="MF_01343"/>
    </source>
</evidence>
<evidence type="ECO:0000256" key="2">
    <source>
        <dbReference type="SAM" id="MobiDB-lite"/>
    </source>
</evidence>
<evidence type="ECO:0000305" key="3"/>
<protein>
    <recommendedName>
        <fullName evidence="1">Small ribosomal subunit protein uS15</fullName>
    </recommendedName>
    <alternativeName>
        <fullName evidence="3">30S ribosomal protein S15</fullName>
    </alternativeName>
</protein>
<gene>
    <name evidence="1" type="primary">rpsO</name>
    <name type="ordered locus">NE0173</name>
</gene>
<accession>Q82XS9</accession>
<keyword id="KW-1185">Reference proteome</keyword>
<keyword id="KW-0687">Ribonucleoprotein</keyword>
<keyword id="KW-0689">Ribosomal protein</keyword>
<keyword id="KW-0694">RNA-binding</keyword>
<keyword id="KW-0699">rRNA-binding</keyword>
<feature type="chain" id="PRO_0000115492" description="Small ribosomal subunit protein uS15">
    <location>
        <begin position="1"/>
        <end position="89"/>
    </location>
</feature>
<feature type="region of interest" description="Disordered" evidence="2">
    <location>
        <begin position="1"/>
        <end position="22"/>
    </location>
</feature>
<feature type="compositionally biased region" description="Polar residues" evidence="2">
    <location>
        <begin position="1"/>
        <end position="10"/>
    </location>
</feature>